<feature type="signal peptide" evidence="2">
    <location>
        <begin position="1"/>
        <end position="22"/>
    </location>
</feature>
<feature type="chain" id="PRO_0000029330" description="Foldase protein PrsA 2">
    <location>
        <begin position="23"/>
        <end position="309"/>
    </location>
</feature>
<feature type="domain" description="PpiC">
    <location>
        <begin position="146"/>
        <end position="241"/>
    </location>
</feature>
<feature type="lipid moiety-binding region" description="N-palmitoyl cysteine" evidence="2">
    <location>
        <position position="23"/>
    </location>
</feature>
<feature type="lipid moiety-binding region" description="S-diacylglycerol cysteine" evidence="2">
    <location>
        <position position="23"/>
    </location>
</feature>
<dbReference type="EC" id="5.2.1.8"/>
<dbReference type="EMBL" id="AE004092">
    <property type="protein sequence ID" value="AAK34705.1"/>
    <property type="molecule type" value="Genomic_DNA"/>
</dbReference>
<dbReference type="EMBL" id="CP000017">
    <property type="protein sequence ID" value="AAZ52350.1"/>
    <property type="molecule type" value="Genomic_DNA"/>
</dbReference>
<dbReference type="RefSeq" id="NP_269984.1">
    <property type="nucleotide sequence ID" value="NC_002737.2"/>
</dbReference>
<dbReference type="SMR" id="P60812"/>
<dbReference type="PaxDb" id="1314-HKU360_01849"/>
<dbReference type="KEGG" id="spy:SPy_2037"/>
<dbReference type="KEGG" id="spz:M5005_Spy1732"/>
<dbReference type="PATRIC" id="fig|160490.10.peg.1765"/>
<dbReference type="HOGENOM" id="CLU_034646_6_0_9"/>
<dbReference type="OMA" id="GDNFNTY"/>
<dbReference type="Proteomes" id="UP000000750">
    <property type="component" value="Chromosome"/>
</dbReference>
<dbReference type="GO" id="GO:0005886">
    <property type="term" value="C:plasma membrane"/>
    <property type="evidence" value="ECO:0007669"/>
    <property type="project" value="UniProtKB-SubCell"/>
</dbReference>
<dbReference type="GO" id="GO:0003755">
    <property type="term" value="F:peptidyl-prolyl cis-trans isomerase activity"/>
    <property type="evidence" value="ECO:0007669"/>
    <property type="project" value="UniProtKB-UniRule"/>
</dbReference>
<dbReference type="GO" id="GO:0006457">
    <property type="term" value="P:protein folding"/>
    <property type="evidence" value="ECO:0007669"/>
    <property type="project" value="UniProtKB-UniRule"/>
</dbReference>
<dbReference type="Gene3D" id="3.10.50.40">
    <property type="match status" value="1"/>
</dbReference>
<dbReference type="Gene3D" id="1.10.4030.10">
    <property type="entry name" value="Porin chaperone SurA, peptide-binding domain"/>
    <property type="match status" value="1"/>
</dbReference>
<dbReference type="HAMAP" id="MF_01145">
    <property type="entry name" value="Foldase_PrsA"/>
    <property type="match status" value="1"/>
</dbReference>
<dbReference type="InterPro" id="IPR023059">
    <property type="entry name" value="Foldase_PrsA"/>
</dbReference>
<dbReference type="InterPro" id="IPR046357">
    <property type="entry name" value="PPIase_dom_sf"/>
</dbReference>
<dbReference type="InterPro" id="IPR000297">
    <property type="entry name" value="PPIase_PpiC"/>
</dbReference>
<dbReference type="InterPro" id="IPR050245">
    <property type="entry name" value="PrsA_foldase"/>
</dbReference>
<dbReference type="InterPro" id="IPR027304">
    <property type="entry name" value="Trigger_fact/SurA_dom_sf"/>
</dbReference>
<dbReference type="NCBIfam" id="NF002361">
    <property type="entry name" value="PRK01326.1"/>
    <property type="match status" value="1"/>
</dbReference>
<dbReference type="NCBIfam" id="NF009105">
    <property type="entry name" value="PRK12450.1"/>
    <property type="match status" value="1"/>
</dbReference>
<dbReference type="PANTHER" id="PTHR47245:SF1">
    <property type="entry name" value="FOLDASE PROTEIN PRSA"/>
    <property type="match status" value="1"/>
</dbReference>
<dbReference type="PANTHER" id="PTHR47245">
    <property type="entry name" value="PEPTIDYLPROLYL ISOMERASE"/>
    <property type="match status" value="1"/>
</dbReference>
<dbReference type="Pfam" id="PF13145">
    <property type="entry name" value="Rotamase_2"/>
    <property type="match status" value="1"/>
</dbReference>
<dbReference type="SUPFAM" id="SSF54534">
    <property type="entry name" value="FKBP-like"/>
    <property type="match status" value="1"/>
</dbReference>
<dbReference type="SUPFAM" id="SSF109998">
    <property type="entry name" value="Triger factor/SurA peptide-binding domain-like"/>
    <property type="match status" value="1"/>
</dbReference>
<dbReference type="PROSITE" id="PS50198">
    <property type="entry name" value="PPIC_PPIASE_2"/>
    <property type="match status" value="1"/>
</dbReference>
<dbReference type="PROSITE" id="PS51257">
    <property type="entry name" value="PROKAR_LIPOPROTEIN"/>
    <property type="match status" value="1"/>
</dbReference>
<proteinExistence type="inferred from homology"/>
<gene>
    <name type="primary">prsA2</name>
    <name type="ordered locus">SPy_2037</name>
    <name type="ordered locus">M5005_Spy1732</name>
</gene>
<comment type="function">
    <text evidence="1">Plays a major role in protein secretion by helping the post-translocational extracellular folding of several secreted proteins.</text>
</comment>
<comment type="catalytic activity">
    <reaction>
        <text>[protein]-peptidylproline (omega=180) = [protein]-peptidylproline (omega=0)</text>
        <dbReference type="Rhea" id="RHEA:16237"/>
        <dbReference type="Rhea" id="RHEA-COMP:10747"/>
        <dbReference type="Rhea" id="RHEA-COMP:10748"/>
        <dbReference type="ChEBI" id="CHEBI:83833"/>
        <dbReference type="ChEBI" id="CHEBI:83834"/>
        <dbReference type="EC" id="5.2.1.8"/>
    </reaction>
</comment>
<comment type="subcellular location">
    <subcellularLocation>
        <location evidence="3">Cell membrane</location>
        <topology evidence="3">Lipid-anchor</topology>
    </subcellularLocation>
</comment>
<comment type="similarity">
    <text evidence="3">Belongs to the PrsA family.</text>
</comment>
<sequence length="309" mass="34349">MKQMNKLITGVVTLATVVTLSACQSSHNNTKLVSMKGDTITVSDFYNETKNTELAQKAMLSLVISRVFETQYANKVSDKEVEKAYKQTADQYGTSFKTVLAQSGLTPETYKKQIRLTKLVEYAVKEQAKNETISKKDYRQAYDAYTPTMTAEIMQFEKEEDAKAALEAVKAEGADFAAIAKEKTTAADKKTTYTFDSGETTLPAEVVRAASGLKEGNRSEIITALDPATSKRTYHIIKVTKKATKKADWKAYQKRLKDIIVTGKLKDPDFQNKVIAKALDKANVKIKDKAFANILAQFAKPNQKQPAQK</sequence>
<keyword id="KW-1003">Cell membrane</keyword>
<keyword id="KW-0413">Isomerase</keyword>
<keyword id="KW-0449">Lipoprotein</keyword>
<keyword id="KW-0472">Membrane</keyword>
<keyword id="KW-0564">Palmitate</keyword>
<keyword id="KW-1185">Reference proteome</keyword>
<keyword id="KW-0697">Rotamase</keyword>
<keyword id="KW-0732">Signal</keyword>
<protein>
    <recommendedName>
        <fullName>Foldase protein PrsA 2</fullName>
        <ecNumber>5.2.1.8</ecNumber>
    </recommendedName>
</protein>
<reference key="1">
    <citation type="journal article" date="2001" name="Proc. Natl. Acad. Sci. U.S.A.">
        <title>Complete genome sequence of an M1 strain of Streptococcus pyogenes.</title>
        <authorList>
            <person name="Ferretti J.J."/>
            <person name="McShan W.M."/>
            <person name="Ajdic D.J."/>
            <person name="Savic D.J."/>
            <person name="Savic G."/>
            <person name="Lyon K."/>
            <person name="Primeaux C."/>
            <person name="Sezate S."/>
            <person name="Suvorov A.N."/>
            <person name="Kenton S."/>
            <person name="Lai H.S."/>
            <person name="Lin S.P."/>
            <person name="Qian Y."/>
            <person name="Jia H.G."/>
            <person name="Najar F.Z."/>
            <person name="Ren Q."/>
            <person name="Zhu H."/>
            <person name="Song L."/>
            <person name="White J."/>
            <person name="Yuan X."/>
            <person name="Clifton S.W."/>
            <person name="Roe B.A."/>
            <person name="McLaughlin R.E."/>
        </authorList>
    </citation>
    <scope>NUCLEOTIDE SEQUENCE [LARGE SCALE GENOMIC DNA]</scope>
    <source>
        <strain>ATCC 700294 / SF370 / Serotype M1</strain>
    </source>
</reference>
<reference key="2">
    <citation type="journal article" date="2005" name="J. Infect. Dis.">
        <title>Evolutionary origin and emergence of a highly successful clone of serotype M1 group A Streptococcus involved multiple horizontal gene transfer events.</title>
        <authorList>
            <person name="Sumby P."/>
            <person name="Porcella S.F."/>
            <person name="Madrigal A.G."/>
            <person name="Barbian K.D."/>
            <person name="Virtaneva K."/>
            <person name="Ricklefs S.M."/>
            <person name="Sturdevant D.E."/>
            <person name="Graham M.R."/>
            <person name="Vuopio-Varkila J."/>
            <person name="Hoe N.P."/>
            <person name="Musser J.M."/>
        </authorList>
    </citation>
    <scope>NUCLEOTIDE SEQUENCE [LARGE SCALE GENOMIC DNA]</scope>
    <source>
        <strain>ATCC BAA-947 / MGAS5005 / Serotype M1</strain>
    </source>
</reference>
<accession>P60812</accession>
<accession>Q48WC5</accession>
<accession>Q99XT9</accession>
<organism>
    <name type="scientific">Streptococcus pyogenes serotype M1</name>
    <dbReference type="NCBI Taxonomy" id="301447"/>
    <lineage>
        <taxon>Bacteria</taxon>
        <taxon>Bacillati</taxon>
        <taxon>Bacillota</taxon>
        <taxon>Bacilli</taxon>
        <taxon>Lactobacillales</taxon>
        <taxon>Streptococcaceae</taxon>
        <taxon>Streptococcus</taxon>
    </lineage>
</organism>
<name>PRSA2_STRP1</name>
<evidence type="ECO:0000250" key="1"/>
<evidence type="ECO:0000255" key="2"/>
<evidence type="ECO:0000305" key="3"/>